<keyword id="KW-0479">Metal-binding</keyword>
<keyword id="KW-1185">Reference proteome</keyword>
<keyword id="KW-0687">Ribonucleoprotein</keyword>
<keyword id="KW-0689">Ribosomal protein</keyword>
<keyword id="KW-0694">RNA-binding</keyword>
<keyword id="KW-0699">rRNA-binding</keyword>
<keyword id="KW-0862">Zinc</keyword>
<dbReference type="EMBL" id="AP008937">
    <property type="protein sequence ID" value="BAG27838.1"/>
    <property type="molecule type" value="Genomic_DNA"/>
</dbReference>
<dbReference type="RefSeq" id="WP_003681596.1">
    <property type="nucleotide sequence ID" value="NC_010610.1"/>
</dbReference>
<dbReference type="SMR" id="B2GDV6"/>
<dbReference type="KEGG" id="lfe:LAF_1502"/>
<dbReference type="eggNOG" id="COG0199">
    <property type="taxonomic scope" value="Bacteria"/>
</dbReference>
<dbReference type="HOGENOM" id="CLU_139869_3_0_9"/>
<dbReference type="Proteomes" id="UP000001697">
    <property type="component" value="Chromosome"/>
</dbReference>
<dbReference type="GO" id="GO:0015935">
    <property type="term" value="C:small ribosomal subunit"/>
    <property type="evidence" value="ECO:0007669"/>
    <property type="project" value="TreeGrafter"/>
</dbReference>
<dbReference type="GO" id="GO:0019843">
    <property type="term" value="F:rRNA binding"/>
    <property type="evidence" value="ECO:0007669"/>
    <property type="project" value="UniProtKB-UniRule"/>
</dbReference>
<dbReference type="GO" id="GO:0003735">
    <property type="term" value="F:structural constituent of ribosome"/>
    <property type="evidence" value="ECO:0007669"/>
    <property type="project" value="InterPro"/>
</dbReference>
<dbReference type="GO" id="GO:0008270">
    <property type="term" value="F:zinc ion binding"/>
    <property type="evidence" value="ECO:0007669"/>
    <property type="project" value="UniProtKB-UniRule"/>
</dbReference>
<dbReference type="GO" id="GO:0006412">
    <property type="term" value="P:translation"/>
    <property type="evidence" value="ECO:0007669"/>
    <property type="project" value="UniProtKB-UniRule"/>
</dbReference>
<dbReference type="FunFam" id="4.10.830.10:FF:000001">
    <property type="entry name" value="30S ribosomal protein S14 type Z"/>
    <property type="match status" value="1"/>
</dbReference>
<dbReference type="Gene3D" id="4.10.830.10">
    <property type="entry name" value="30s Ribosomal Protein S14, Chain N"/>
    <property type="match status" value="1"/>
</dbReference>
<dbReference type="HAMAP" id="MF_01364_B">
    <property type="entry name" value="Ribosomal_uS14_2_B"/>
    <property type="match status" value="1"/>
</dbReference>
<dbReference type="InterPro" id="IPR001209">
    <property type="entry name" value="Ribosomal_uS14"/>
</dbReference>
<dbReference type="InterPro" id="IPR023053">
    <property type="entry name" value="Ribosomal_uS14_bact"/>
</dbReference>
<dbReference type="InterPro" id="IPR018271">
    <property type="entry name" value="Ribosomal_uS14_CS"/>
</dbReference>
<dbReference type="InterPro" id="IPR043140">
    <property type="entry name" value="Ribosomal_uS14_sf"/>
</dbReference>
<dbReference type="NCBIfam" id="NF005974">
    <property type="entry name" value="PRK08061.1"/>
    <property type="match status" value="1"/>
</dbReference>
<dbReference type="PANTHER" id="PTHR19836">
    <property type="entry name" value="30S RIBOSOMAL PROTEIN S14"/>
    <property type="match status" value="1"/>
</dbReference>
<dbReference type="PANTHER" id="PTHR19836:SF26">
    <property type="entry name" value="SMALL RIBOSOMAL SUBUNIT PROTEIN US14B"/>
    <property type="match status" value="1"/>
</dbReference>
<dbReference type="Pfam" id="PF00253">
    <property type="entry name" value="Ribosomal_S14"/>
    <property type="match status" value="1"/>
</dbReference>
<dbReference type="SUPFAM" id="SSF57716">
    <property type="entry name" value="Glucocorticoid receptor-like (DNA-binding domain)"/>
    <property type="match status" value="1"/>
</dbReference>
<dbReference type="PROSITE" id="PS00527">
    <property type="entry name" value="RIBOSOMAL_S14"/>
    <property type="match status" value="1"/>
</dbReference>
<protein>
    <recommendedName>
        <fullName evidence="1">Small ribosomal subunit protein uS14</fullName>
    </recommendedName>
    <alternativeName>
        <fullName evidence="2">30S ribosomal protein S14 type Z</fullName>
    </alternativeName>
</protein>
<comment type="function">
    <text evidence="1">Binds 16S rRNA, required for the assembly of 30S particles and may also be responsible for determining the conformation of the 16S rRNA at the A site.</text>
</comment>
<comment type="cofactor">
    <cofactor evidence="1">
        <name>Zn(2+)</name>
        <dbReference type="ChEBI" id="CHEBI:29105"/>
    </cofactor>
    <text evidence="1">Binds 1 zinc ion per subunit.</text>
</comment>
<comment type="subunit">
    <text evidence="1">Part of the 30S ribosomal subunit. Contacts proteins S3 and S10.</text>
</comment>
<comment type="similarity">
    <text evidence="1">Belongs to the universal ribosomal protein uS14 family. Zinc-binding uS14 subfamily.</text>
</comment>
<evidence type="ECO:0000255" key="1">
    <source>
        <dbReference type="HAMAP-Rule" id="MF_01364"/>
    </source>
</evidence>
<evidence type="ECO:0000305" key="2"/>
<proteinExistence type="inferred from homology"/>
<name>RS14Z_LIMF3</name>
<accession>B2GDV6</accession>
<feature type="chain" id="PRO_1000143910" description="Small ribosomal subunit protein uS14">
    <location>
        <begin position="1"/>
        <end position="61"/>
    </location>
</feature>
<feature type="binding site" evidence="1">
    <location>
        <position position="24"/>
    </location>
    <ligand>
        <name>Zn(2+)</name>
        <dbReference type="ChEBI" id="CHEBI:29105"/>
    </ligand>
</feature>
<feature type="binding site" evidence="1">
    <location>
        <position position="27"/>
    </location>
    <ligand>
        <name>Zn(2+)</name>
        <dbReference type="ChEBI" id="CHEBI:29105"/>
    </ligand>
</feature>
<feature type="binding site" evidence="1">
    <location>
        <position position="40"/>
    </location>
    <ligand>
        <name>Zn(2+)</name>
        <dbReference type="ChEBI" id="CHEBI:29105"/>
    </ligand>
</feature>
<feature type="binding site" evidence="1">
    <location>
        <position position="43"/>
    </location>
    <ligand>
        <name>Zn(2+)</name>
        <dbReference type="ChEBI" id="CHEBI:29105"/>
    </ligand>
</feature>
<reference key="1">
    <citation type="journal article" date="2008" name="DNA Res.">
        <title>Comparative genome analysis of Lactobacillus reuteri and Lactobacillus fermentum reveal a genomic island for reuterin and cobalamin production.</title>
        <authorList>
            <person name="Morita H."/>
            <person name="Toh H."/>
            <person name="Fukuda S."/>
            <person name="Horikawa H."/>
            <person name="Oshima K."/>
            <person name="Suzuki T."/>
            <person name="Murakami M."/>
            <person name="Hisamatsu S."/>
            <person name="Kato Y."/>
            <person name="Takizawa T."/>
            <person name="Fukuoka H."/>
            <person name="Yoshimura T."/>
            <person name="Itoh K."/>
            <person name="O'Sullivan D.J."/>
            <person name="McKay L.L."/>
            <person name="Ohno H."/>
            <person name="Kikuchi J."/>
            <person name="Masaoka T."/>
            <person name="Hattori M."/>
        </authorList>
    </citation>
    <scope>NUCLEOTIDE SEQUENCE [LARGE SCALE GENOMIC DNA]</scope>
    <source>
        <strain>NBRC 3956 / LMG 18251</strain>
    </source>
</reference>
<gene>
    <name evidence="1" type="primary">rpsZ</name>
    <name evidence="1" type="synonym">rpsN</name>
    <name type="ordered locus">LAF_1502</name>
</gene>
<organism>
    <name type="scientific">Limosilactobacillus fermentum (strain NBRC 3956 / LMG 18251)</name>
    <name type="common">Lactobacillus fermentum</name>
    <dbReference type="NCBI Taxonomy" id="334390"/>
    <lineage>
        <taxon>Bacteria</taxon>
        <taxon>Bacillati</taxon>
        <taxon>Bacillota</taxon>
        <taxon>Bacilli</taxon>
        <taxon>Lactobacillales</taxon>
        <taxon>Lactobacillaceae</taxon>
        <taxon>Limosilactobacillus</taxon>
    </lineage>
</organism>
<sequence length="61" mass="7153">MAKKSMIAKSERPAKFSTQEYTRCERCGRPHSVYRKFHLCRICLRDLAHKGQIPGMKKASW</sequence>